<evidence type="ECO:0000250" key="1">
    <source>
        <dbReference type="UniProtKB" id="P62308"/>
    </source>
</evidence>
<evidence type="ECO:0000255" key="2">
    <source>
        <dbReference type="PROSITE-ProRule" id="PRU01346"/>
    </source>
</evidence>
<evidence type="ECO:0000269" key="3">
    <source>
    </source>
</evidence>
<evidence type="ECO:0000269" key="4">
    <source>
    </source>
</evidence>
<evidence type="ECO:0000305" key="5"/>
<evidence type="ECO:0007829" key="6">
    <source>
        <dbReference type="PDB" id="9ESI"/>
    </source>
</evidence>
<feature type="chain" id="PRO_0000125551" description="Small nuclear ribonucleoprotein G">
    <location>
        <begin position="1"/>
        <end position="77"/>
    </location>
</feature>
<feature type="domain" description="Sm" evidence="2">
    <location>
        <begin position="4"/>
        <end position="76"/>
    </location>
</feature>
<feature type="helix" evidence="6">
    <location>
        <begin position="10"/>
        <end position="12"/>
    </location>
</feature>
<feature type="strand" evidence="6">
    <location>
        <begin position="15"/>
        <end position="21"/>
    </location>
</feature>
<feature type="turn" evidence="6">
    <location>
        <begin position="22"/>
        <end position="24"/>
    </location>
</feature>
<feature type="strand" evidence="6">
    <location>
        <begin position="25"/>
        <end position="27"/>
    </location>
</feature>
<feature type="strand" evidence="6">
    <location>
        <begin position="30"/>
        <end position="34"/>
    </location>
</feature>
<feature type="strand" evidence="6">
    <location>
        <begin position="40"/>
        <end position="48"/>
    </location>
</feature>
<feature type="strand" evidence="6">
    <location>
        <begin position="54"/>
        <end position="62"/>
    </location>
</feature>
<feature type="helix" evidence="6">
    <location>
        <begin position="64"/>
        <end position="66"/>
    </location>
</feature>
<feature type="strand" evidence="6">
    <location>
        <begin position="67"/>
        <end position="72"/>
    </location>
</feature>
<reference key="1">
    <citation type="journal article" date="2002" name="Nature">
        <title>The genome sequence of Schizosaccharomyces pombe.</title>
        <authorList>
            <person name="Wood V."/>
            <person name="Gwilliam R."/>
            <person name="Rajandream M.A."/>
            <person name="Lyne M.H."/>
            <person name="Lyne R."/>
            <person name="Stewart A."/>
            <person name="Sgouros J.G."/>
            <person name="Peat N."/>
            <person name="Hayles J."/>
            <person name="Baker S.G."/>
            <person name="Basham D."/>
            <person name="Bowman S."/>
            <person name="Brooks K."/>
            <person name="Brown D."/>
            <person name="Brown S."/>
            <person name="Chillingworth T."/>
            <person name="Churcher C.M."/>
            <person name="Collins M."/>
            <person name="Connor R."/>
            <person name="Cronin A."/>
            <person name="Davis P."/>
            <person name="Feltwell T."/>
            <person name="Fraser A."/>
            <person name="Gentles S."/>
            <person name="Goble A."/>
            <person name="Hamlin N."/>
            <person name="Harris D.E."/>
            <person name="Hidalgo J."/>
            <person name="Hodgson G."/>
            <person name="Holroyd S."/>
            <person name="Hornsby T."/>
            <person name="Howarth S."/>
            <person name="Huckle E.J."/>
            <person name="Hunt S."/>
            <person name="Jagels K."/>
            <person name="James K.D."/>
            <person name="Jones L."/>
            <person name="Jones M."/>
            <person name="Leather S."/>
            <person name="McDonald S."/>
            <person name="McLean J."/>
            <person name="Mooney P."/>
            <person name="Moule S."/>
            <person name="Mungall K.L."/>
            <person name="Murphy L.D."/>
            <person name="Niblett D."/>
            <person name="Odell C."/>
            <person name="Oliver K."/>
            <person name="O'Neil S."/>
            <person name="Pearson D."/>
            <person name="Quail M.A."/>
            <person name="Rabbinowitsch E."/>
            <person name="Rutherford K.M."/>
            <person name="Rutter S."/>
            <person name="Saunders D."/>
            <person name="Seeger K."/>
            <person name="Sharp S."/>
            <person name="Skelton J."/>
            <person name="Simmonds M.N."/>
            <person name="Squares R."/>
            <person name="Squares S."/>
            <person name="Stevens K."/>
            <person name="Taylor K."/>
            <person name="Taylor R.G."/>
            <person name="Tivey A."/>
            <person name="Walsh S.V."/>
            <person name="Warren T."/>
            <person name="Whitehead S."/>
            <person name="Woodward J.R."/>
            <person name="Volckaert G."/>
            <person name="Aert R."/>
            <person name="Robben J."/>
            <person name="Grymonprez B."/>
            <person name="Weltjens I."/>
            <person name="Vanstreels E."/>
            <person name="Rieger M."/>
            <person name="Schaefer M."/>
            <person name="Mueller-Auer S."/>
            <person name="Gabel C."/>
            <person name="Fuchs M."/>
            <person name="Duesterhoeft A."/>
            <person name="Fritzc C."/>
            <person name="Holzer E."/>
            <person name="Moestl D."/>
            <person name="Hilbert H."/>
            <person name="Borzym K."/>
            <person name="Langer I."/>
            <person name="Beck A."/>
            <person name="Lehrach H."/>
            <person name="Reinhardt R."/>
            <person name="Pohl T.M."/>
            <person name="Eger P."/>
            <person name="Zimmermann W."/>
            <person name="Wedler H."/>
            <person name="Wambutt R."/>
            <person name="Purnelle B."/>
            <person name="Goffeau A."/>
            <person name="Cadieu E."/>
            <person name="Dreano S."/>
            <person name="Gloux S."/>
            <person name="Lelaure V."/>
            <person name="Mottier S."/>
            <person name="Galibert F."/>
            <person name="Aves S.J."/>
            <person name="Xiang Z."/>
            <person name="Hunt C."/>
            <person name="Moore K."/>
            <person name="Hurst S.M."/>
            <person name="Lucas M."/>
            <person name="Rochet M."/>
            <person name="Gaillardin C."/>
            <person name="Tallada V.A."/>
            <person name="Garzon A."/>
            <person name="Thode G."/>
            <person name="Daga R.R."/>
            <person name="Cruzado L."/>
            <person name="Jimenez J."/>
            <person name="Sanchez M."/>
            <person name="del Rey F."/>
            <person name="Benito J."/>
            <person name="Dominguez A."/>
            <person name="Revuelta J.L."/>
            <person name="Moreno S."/>
            <person name="Armstrong J."/>
            <person name="Forsburg S.L."/>
            <person name="Cerutti L."/>
            <person name="Lowe T."/>
            <person name="McCombie W.R."/>
            <person name="Paulsen I."/>
            <person name="Potashkin J."/>
            <person name="Shpakovski G.V."/>
            <person name="Ussery D."/>
            <person name="Barrell B.G."/>
            <person name="Nurse P."/>
        </authorList>
    </citation>
    <scope>NUCLEOTIDE SEQUENCE [LARGE SCALE GENOMIC DNA]</scope>
    <source>
        <strain>972 / ATCC 24843</strain>
    </source>
</reference>
<reference key="2">
    <citation type="journal article" date="2002" name="Mol. Cell. Biol.">
        <title>Proteomics analysis reveals stable multiprotein complexes in both fission and budding yeasts containing Myb-related Cdc5p/Cef1p, novel pre-mRNA splicing factors, and snRNAs.</title>
        <authorList>
            <person name="Ohi M.D."/>
            <person name="Link A.J."/>
            <person name="Ren L."/>
            <person name="Jennings J.L."/>
            <person name="McDonald W.H."/>
            <person name="Gould K.L."/>
        </authorList>
    </citation>
    <scope>IDENTIFICATION IN THE CWF COMPLEX</scope>
    <scope>IDENTIFICATION BY MASS SPECTROMETRY</scope>
</reference>
<reference key="3">
    <citation type="journal article" date="2006" name="Nat. Biotechnol.">
        <title>ORFeome cloning and global analysis of protein localization in the fission yeast Schizosaccharomyces pombe.</title>
        <authorList>
            <person name="Matsuyama A."/>
            <person name="Arai R."/>
            <person name="Yashiroda Y."/>
            <person name="Shirai A."/>
            <person name="Kamata A."/>
            <person name="Sekido S."/>
            <person name="Kobayashi Y."/>
            <person name="Hashimoto A."/>
            <person name="Hamamoto M."/>
            <person name="Hiraoka Y."/>
            <person name="Horinouchi S."/>
            <person name="Yoshida M."/>
        </authorList>
    </citation>
    <scope>SUBCELLULAR LOCATION [LARGE SCALE ANALYSIS]</scope>
</reference>
<proteinExistence type="evidence at protein level"/>
<accession>O74966</accession>
<organism>
    <name type="scientific">Schizosaccharomyces pombe (strain 972 / ATCC 24843)</name>
    <name type="common">Fission yeast</name>
    <dbReference type="NCBI Taxonomy" id="284812"/>
    <lineage>
        <taxon>Eukaryota</taxon>
        <taxon>Fungi</taxon>
        <taxon>Dikarya</taxon>
        <taxon>Ascomycota</taxon>
        <taxon>Taphrinomycotina</taxon>
        <taxon>Schizosaccharomycetes</taxon>
        <taxon>Schizosaccharomycetales</taxon>
        <taxon>Schizosaccharomycetaceae</taxon>
        <taxon>Schizosaccharomyces</taxon>
    </lineage>
</organism>
<protein>
    <recommendedName>
        <fullName>Small nuclear ribonucleoprotein G</fullName>
        <shortName>snRNP-G</shortName>
    </recommendedName>
    <alternativeName>
        <fullName>Sm protein G</fullName>
        <shortName>Sm-G</shortName>
        <shortName>SmG</shortName>
    </alternativeName>
</protein>
<dbReference type="EMBL" id="CU329671">
    <property type="protein sequence ID" value="CAA19285.1"/>
    <property type="molecule type" value="Genomic_DNA"/>
</dbReference>
<dbReference type="PIR" id="T40477">
    <property type="entry name" value="T40477"/>
</dbReference>
<dbReference type="RefSeq" id="NP_596422.1">
    <property type="nucleotide sequence ID" value="NM_001022341.2"/>
</dbReference>
<dbReference type="PDB" id="3JB9">
    <property type="method" value="EM"/>
    <property type="resolution" value="3.60 A"/>
    <property type="chains" value="J/o=1-77"/>
</dbReference>
<dbReference type="PDB" id="9ESH">
    <property type="method" value="EM"/>
    <property type="resolution" value="3.20 A"/>
    <property type="chains" value="J=1-77"/>
</dbReference>
<dbReference type="PDB" id="9ESI">
    <property type="method" value="EM"/>
    <property type="resolution" value="3.10 A"/>
    <property type="chains" value="J=1-77"/>
</dbReference>
<dbReference type="PDBsum" id="3JB9"/>
<dbReference type="PDBsum" id="9ESH"/>
<dbReference type="PDBsum" id="9ESI"/>
<dbReference type="EMDB" id="EMD-19941"/>
<dbReference type="EMDB" id="EMD-19942"/>
<dbReference type="SMR" id="O74966"/>
<dbReference type="BioGRID" id="277372">
    <property type="interactions" value="24"/>
</dbReference>
<dbReference type="FunCoup" id="O74966">
    <property type="interactions" value="673"/>
</dbReference>
<dbReference type="IntAct" id="O74966">
    <property type="interactions" value="7"/>
</dbReference>
<dbReference type="STRING" id="284812.O74966"/>
<dbReference type="iPTMnet" id="O74966"/>
<dbReference type="PaxDb" id="4896-SPBC4B4.05.1"/>
<dbReference type="EnsemblFungi" id="SPBC4B4.05.1">
    <property type="protein sequence ID" value="SPBC4B4.05.1:pep"/>
    <property type="gene ID" value="SPBC4B4.05"/>
</dbReference>
<dbReference type="GeneID" id="2540855"/>
<dbReference type="KEGG" id="spo:2540855"/>
<dbReference type="PomBase" id="SPBC4B4.05">
    <property type="gene designation" value="smg1"/>
</dbReference>
<dbReference type="VEuPathDB" id="FungiDB:SPBC4B4.05"/>
<dbReference type="eggNOG" id="KOG1780">
    <property type="taxonomic scope" value="Eukaryota"/>
</dbReference>
<dbReference type="HOGENOM" id="CLU_076902_10_1_1"/>
<dbReference type="InParanoid" id="O74966"/>
<dbReference type="OMA" id="MSKAQPP"/>
<dbReference type="PhylomeDB" id="O74966"/>
<dbReference type="Reactome" id="R-SPO-72163">
    <property type="pathway name" value="mRNA Splicing - Major Pathway"/>
</dbReference>
<dbReference type="PRO" id="PR:O74966"/>
<dbReference type="Proteomes" id="UP000002485">
    <property type="component" value="Chromosome II"/>
</dbReference>
<dbReference type="GO" id="GO:0071013">
    <property type="term" value="C:catalytic step 2 spliceosome"/>
    <property type="evidence" value="ECO:0000318"/>
    <property type="project" value="GO_Central"/>
</dbReference>
<dbReference type="GO" id="GO:0005829">
    <property type="term" value="C:cytosol"/>
    <property type="evidence" value="ECO:0007005"/>
    <property type="project" value="PomBase"/>
</dbReference>
<dbReference type="GO" id="GO:0005634">
    <property type="term" value="C:nucleus"/>
    <property type="evidence" value="ECO:0007005"/>
    <property type="project" value="PomBase"/>
</dbReference>
<dbReference type="GO" id="GO:0071014">
    <property type="term" value="C:post-mRNA release spliceosomal complex"/>
    <property type="evidence" value="ECO:0000314"/>
    <property type="project" value="PomBase"/>
</dbReference>
<dbReference type="GO" id="GO:0071011">
    <property type="term" value="C:precatalytic spliceosome"/>
    <property type="evidence" value="ECO:0000318"/>
    <property type="project" value="GO_Central"/>
</dbReference>
<dbReference type="GO" id="GO:0034719">
    <property type="term" value="C:SMN-Sm protein complex"/>
    <property type="evidence" value="ECO:0000318"/>
    <property type="project" value="GO_Central"/>
</dbReference>
<dbReference type="GO" id="GO:0097526">
    <property type="term" value="C:spliceosomal tri-snRNP complex"/>
    <property type="evidence" value="ECO:0000318"/>
    <property type="project" value="GO_Central"/>
</dbReference>
<dbReference type="GO" id="GO:0005685">
    <property type="term" value="C:U1 snRNP"/>
    <property type="evidence" value="ECO:0000314"/>
    <property type="project" value="PomBase"/>
</dbReference>
<dbReference type="GO" id="GO:0005686">
    <property type="term" value="C:U2 snRNP"/>
    <property type="evidence" value="ECO:0000314"/>
    <property type="project" value="PomBase"/>
</dbReference>
<dbReference type="GO" id="GO:0071004">
    <property type="term" value="C:U2-type prespliceosome"/>
    <property type="evidence" value="ECO:0000318"/>
    <property type="project" value="GO_Central"/>
</dbReference>
<dbReference type="GO" id="GO:0005687">
    <property type="term" value="C:U4 snRNP"/>
    <property type="evidence" value="ECO:0000318"/>
    <property type="project" value="GO_Central"/>
</dbReference>
<dbReference type="GO" id="GO:0046540">
    <property type="term" value="C:U4/U6 x U5 tri-snRNP complex"/>
    <property type="evidence" value="ECO:0000250"/>
    <property type="project" value="PomBase"/>
</dbReference>
<dbReference type="GO" id="GO:0005682">
    <property type="term" value="C:U5 snRNP"/>
    <property type="evidence" value="ECO:0000314"/>
    <property type="project" value="PomBase"/>
</dbReference>
<dbReference type="GO" id="GO:0003723">
    <property type="term" value="F:RNA binding"/>
    <property type="evidence" value="ECO:0007669"/>
    <property type="project" value="UniProtKB-KW"/>
</dbReference>
<dbReference type="GO" id="GO:0000395">
    <property type="term" value="P:mRNA 5'-splice site recognition"/>
    <property type="evidence" value="ECO:0000305"/>
    <property type="project" value="PomBase"/>
</dbReference>
<dbReference type="GO" id="GO:0045292">
    <property type="term" value="P:mRNA cis splicing, via spliceosome"/>
    <property type="evidence" value="ECO:0000269"/>
    <property type="project" value="PomBase"/>
</dbReference>
<dbReference type="GO" id="GO:0000398">
    <property type="term" value="P:mRNA splicing, via spliceosome"/>
    <property type="evidence" value="ECO:0000318"/>
    <property type="project" value="GO_Central"/>
</dbReference>
<dbReference type="CDD" id="cd01719">
    <property type="entry name" value="Sm_G"/>
    <property type="match status" value="1"/>
</dbReference>
<dbReference type="FunFam" id="2.30.30.100:FF:000019">
    <property type="entry name" value="Small nuclear ribonucleoprotein G"/>
    <property type="match status" value="1"/>
</dbReference>
<dbReference type="Gene3D" id="2.30.30.100">
    <property type="match status" value="1"/>
</dbReference>
<dbReference type="InterPro" id="IPR044641">
    <property type="entry name" value="Lsm7/SmG-like"/>
</dbReference>
<dbReference type="InterPro" id="IPR010920">
    <property type="entry name" value="LSM_dom_sf"/>
</dbReference>
<dbReference type="InterPro" id="IPR047575">
    <property type="entry name" value="Sm"/>
</dbReference>
<dbReference type="InterPro" id="IPR001163">
    <property type="entry name" value="Sm_dom_euk/arc"/>
</dbReference>
<dbReference type="InterPro" id="IPR034098">
    <property type="entry name" value="Sm_G"/>
</dbReference>
<dbReference type="PANTHER" id="PTHR10553">
    <property type="entry name" value="SMALL NUCLEAR RIBONUCLEOPROTEIN"/>
    <property type="match status" value="1"/>
</dbReference>
<dbReference type="PANTHER" id="PTHR10553:SF2">
    <property type="entry name" value="SMALL NUCLEAR RIBONUCLEOPROTEIN G"/>
    <property type="match status" value="1"/>
</dbReference>
<dbReference type="Pfam" id="PF01423">
    <property type="entry name" value="LSM"/>
    <property type="match status" value="1"/>
</dbReference>
<dbReference type="SMART" id="SM00651">
    <property type="entry name" value="Sm"/>
    <property type="match status" value="1"/>
</dbReference>
<dbReference type="SUPFAM" id="SSF50182">
    <property type="entry name" value="Sm-like ribonucleoproteins"/>
    <property type="match status" value="1"/>
</dbReference>
<dbReference type="PROSITE" id="PS52002">
    <property type="entry name" value="SM"/>
    <property type="match status" value="1"/>
</dbReference>
<gene>
    <name type="primary">smg1</name>
    <name type="ORF">SPBC4B4.05</name>
</gene>
<sequence>MSKAGAPDLKKYLDRQVFVQLNGSRKVYGVLRGYDIFLNIVLEDSIEEKVDGEKVKIGSVAIRGNSVIMIETLDKMT</sequence>
<keyword id="KW-0002">3D-structure</keyword>
<keyword id="KW-0963">Cytoplasm</keyword>
<keyword id="KW-0507">mRNA processing</keyword>
<keyword id="KW-0508">mRNA splicing</keyword>
<keyword id="KW-0539">Nucleus</keyword>
<keyword id="KW-1185">Reference proteome</keyword>
<keyword id="KW-0687">Ribonucleoprotein</keyword>
<keyword id="KW-0694">RNA-binding</keyword>
<keyword id="KW-0747">Spliceosome</keyword>
<comment type="function">
    <text evidence="1">Plays a role in pre-mRNA splicing as a core component of the spliceosomal U1, U2, U4 and U5 small nuclear ribonucleoproteins (snRNPs), the building blocks of the spliceosome (By similarity).</text>
</comment>
<comment type="subunit">
    <text evidence="3">Belongs to the 40S cdc5-associated complex (or cwf complex), a spliceosome sub-complex reminiscent of a late-stage spliceosome composed of the U2, U5 and U6 snRNAs and at least brr2, cdc5, cwf2/prp3, cwf3/syf1, cwf4/syf3, cwf5/ecm2, spp42/cwf6, cwf7/spf27, cwf8, cwf9, cwf10, cwf11, cwf12, prp45/cwf13, cwf14, cwf15, cwf16, cwf17, cwf18, cwf19, cwf20, cwf21, cwf22, cwf23, cwf24, cwf25, cwf26, cyp7/cwf27, cwf28, cwf29/ist3, lea1, msl1, prp5/cwf1, prp10, prp12/sap130, prp17, prp22, sap61, sap62, sap114, sap145, slu7, smb1, smd1, smd3, smf1, smg1 and syf2.</text>
</comment>
<comment type="subcellular location">
    <subcellularLocation>
        <location evidence="4">Nucleus</location>
    </subcellularLocation>
    <subcellularLocation>
        <location evidence="4">Cytoplasm</location>
    </subcellularLocation>
</comment>
<comment type="similarity">
    <text evidence="5">Belongs to the snRNP Sm proteins family.</text>
</comment>
<name>RUXG_SCHPO</name>